<protein>
    <recommendedName>
        <fullName evidence="1">1-deoxy-D-xylulose-5-phosphate synthase</fullName>
        <ecNumber evidence="1">2.2.1.7</ecNumber>
    </recommendedName>
    <alternativeName>
        <fullName evidence="1">1-deoxyxylulose-5-phosphate synthase</fullName>
        <shortName evidence="1">DXP synthase</shortName>
        <shortName evidence="1">DXPS</shortName>
    </alternativeName>
</protein>
<organism>
    <name type="scientific">Brucella ovis (strain ATCC 25840 / 63/290 / NCTC 10512)</name>
    <dbReference type="NCBI Taxonomy" id="444178"/>
    <lineage>
        <taxon>Bacteria</taxon>
        <taxon>Pseudomonadati</taxon>
        <taxon>Pseudomonadota</taxon>
        <taxon>Alphaproteobacteria</taxon>
        <taxon>Hyphomicrobiales</taxon>
        <taxon>Brucellaceae</taxon>
        <taxon>Brucella/Ochrobactrum group</taxon>
        <taxon>Brucella</taxon>
    </lineage>
</organism>
<gene>
    <name evidence="1" type="primary">dxs</name>
    <name type="ordered locus">BOV_0443</name>
</gene>
<name>DXS_BRUO2</name>
<accession>A5VP09</accession>
<sequence length="643" mass="69236">MSRPSTPLLDKVPTPDRLRALPERDLPQLAEELRTELIDAVSTTGGHLGAGLGVVELTVALHHVFNTPYDRIIWDVGHQAYPHKILTGRRDRIRTLRQAGGLSGFTKRAESEYDPFGAAHSSTSISAGLGMAVASELSGEKRNVIAVIGDGSMSAGMAYEAMNNAGALDARLIVILNDNDMSIAPPTGAMSAYLARLVSGRTYRSVREAAKQVAQKLPKFLQDKARKSEEYARAFFTGGTLFEELGFYYVGPIDGHNLDHLLPVLKNVRDTQKGPVLIHVVTQKGKGYAPAEAAADKYHGVNKFDVITGKQAKPPANAPSYTKIFGTSLIEEARHDDKIVAVTAAMPTGTGLDLFGEAFPKRVFDVGIAEQHAVTFAAGLASEGYKPFCAIYSTFLQRGYDQVVHDVSIQNLPVRFPIDRAGLVGADGPTHAGSFDTGFLAALPGFVVMAASDEAELRHMVRTAAEYDEGPISFRYPRGDGVGVDLPERGSVLEIGKGRIVREGTKVALLSFGTRLQECLAAAEELGAAGLSTTVVDARFAKPLDHDLIRRLAREHEVLVMVEEGAVGGFGSHVLQFLATDGLLDRGLKVRALTLPDIYQDHGKPDAMYAEAGLDRTGIVRTVFAALHRDELGHEALPTPFRA</sequence>
<feature type="chain" id="PRO_1000019011" description="1-deoxy-D-xylulose-5-phosphate synthase">
    <location>
        <begin position="1"/>
        <end position="643"/>
    </location>
</feature>
<feature type="binding site" evidence="1">
    <location>
        <position position="78"/>
    </location>
    <ligand>
        <name>thiamine diphosphate</name>
        <dbReference type="ChEBI" id="CHEBI:58937"/>
    </ligand>
</feature>
<feature type="binding site" evidence="1">
    <location>
        <begin position="119"/>
        <end position="121"/>
    </location>
    <ligand>
        <name>thiamine diphosphate</name>
        <dbReference type="ChEBI" id="CHEBI:58937"/>
    </ligand>
</feature>
<feature type="binding site" evidence="1">
    <location>
        <position position="150"/>
    </location>
    <ligand>
        <name>Mg(2+)</name>
        <dbReference type="ChEBI" id="CHEBI:18420"/>
    </ligand>
</feature>
<feature type="binding site" evidence="1">
    <location>
        <begin position="151"/>
        <end position="152"/>
    </location>
    <ligand>
        <name>thiamine diphosphate</name>
        <dbReference type="ChEBI" id="CHEBI:58937"/>
    </ligand>
</feature>
<feature type="binding site" evidence="1">
    <location>
        <position position="179"/>
    </location>
    <ligand>
        <name>Mg(2+)</name>
        <dbReference type="ChEBI" id="CHEBI:18420"/>
    </ligand>
</feature>
<feature type="binding site" evidence="1">
    <location>
        <position position="179"/>
    </location>
    <ligand>
        <name>thiamine diphosphate</name>
        <dbReference type="ChEBI" id="CHEBI:58937"/>
    </ligand>
</feature>
<feature type="binding site" evidence="1">
    <location>
        <position position="288"/>
    </location>
    <ligand>
        <name>thiamine diphosphate</name>
        <dbReference type="ChEBI" id="CHEBI:58937"/>
    </ligand>
</feature>
<feature type="binding site" evidence="1">
    <location>
        <position position="370"/>
    </location>
    <ligand>
        <name>thiamine diphosphate</name>
        <dbReference type="ChEBI" id="CHEBI:58937"/>
    </ligand>
</feature>
<reference key="1">
    <citation type="journal article" date="2009" name="PLoS ONE">
        <title>Genome degradation in Brucella ovis corresponds with narrowing of its host range and tissue tropism.</title>
        <authorList>
            <person name="Tsolis R.M."/>
            <person name="Seshadri R."/>
            <person name="Santos R.L."/>
            <person name="Sangari F.J."/>
            <person name="Lobo J.M."/>
            <person name="de Jong M.F."/>
            <person name="Ren Q."/>
            <person name="Myers G."/>
            <person name="Brinkac L.M."/>
            <person name="Nelson W.C."/>
            <person name="Deboy R.T."/>
            <person name="Angiuoli S."/>
            <person name="Khouri H."/>
            <person name="Dimitrov G."/>
            <person name="Robinson J.R."/>
            <person name="Mulligan S."/>
            <person name="Walker R.L."/>
            <person name="Elzer P.E."/>
            <person name="Hassan K.A."/>
            <person name="Paulsen I.T."/>
        </authorList>
    </citation>
    <scope>NUCLEOTIDE SEQUENCE [LARGE SCALE GENOMIC DNA]</scope>
    <source>
        <strain>ATCC 25840 / 63/290 / NCTC 10512</strain>
    </source>
</reference>
<comment type="function">
    <text evidence="1">Catalyzes the acyloin condensation reaction between C atoms 2 and 3 of pyruvate and glyceraldehyde 3-phosphate to yield 1-deoxy-D-xylulose-5-phosphate (DXP).</text>
</comment>
<comment type="catalytic activity">
    <reaction evidence="1">
        <text>D-glyceraldehyde 3-phosphate + pyruvate + H(+) = 1-deoxy-D-xylulose 5-phosphate + CO2</text>
        <dbReference type="Rhea" id="RHEA:12605"/>
        <dbReference type="ChEBI" id="CHEBI:15361"/>
        <dbReference type="ChEBI" id="CHEBI:15378"/>
        <dbReference type="ChEBI" id="CHEBI:16526"/>
        <dbReference type="ChEBI" id="CHEBI:57792"/>
        <dbReference type="ChEBI" id="CHEBI:59776"/>
        <dbReference type="EC" id="2.2.1.7"/>
    </reaction>
</comment>
<comment type="cofactor">
    <cofactor evidence="1">
        <name>Mg(2+)</name>
        <dbReference type="ChEBI" id="CHEBI:18420"/>
    </cofactor>
    <text evidence="1">Binds 1 Mg(2+) ion per subunit.</text>
</comment>
<comment type="cofactor">
    <cofactor evidence="1">
        <name>thiamine diphosphate</name>
        <dbReference type="ChEBI" id="CHEBI:58937"/>
    </cofactor>
    <text evidence="1">Binds 1 thiamine pyrophosphate per subunit.</text>
</comment>
<comment type="pathway">
    <text evidence="1">Metabolic intermediate biosynthesis; 1-deoxy-D-xylulose 5-phosphate biosynthesis; 1-deoxy-D-xylulose 5-phosphate from D-glyceraldehyde 3-phosphate and pyruvate: step 1/1.</text>
</comment>
<comment type="subunit">
    <text evidence="1">Homodimer.</text>
</comment>
<comment type="similarity">
    <text evidence="1">Belongs to the transketolase family. DXPS subfamily.</text>
</comment>
<proteinExistence type="inferred from homology"/>
<dbReference type="EC" id="2.2.1.7" evidence="1"/>
<dbReference type="EMBL" id="CP000708">
    <property type="protein sequence ID" value="ABQ61862.1"/>
    <property type="molecule type" value="Genomic_DNA"/>
</dbReference>
<dbReference type="RefSeq" id="WP_006017217.1">
    <property type="nucleotide sequence ID" value="NC_009505.1"/>
</dbReference>
<dbReference type="SMR" id="A5VP09"/>
<dbReference type="GeneID" id="45123921"/>
<dbReference type="KEGG" id="bov:BOV_0443"/>
<dbReference type="HOGENOM" id="CLU_009227_1_4_5"/>
<dbReference type="UniPathway" id="UPA00064">
    <property type="reaction ID" value="UER00091"/>
</dbReference>
<dbReference type="Proteomes" id="UP000006383">
    <property type="component" value="Chromosome I"/>
</dbReference>
<dbReference type="GO" id="GO:0008661">
    <property type="term" value="F:1-deoxy-D-xylulose-5-phosphate synthase activity"/>
    <property type="evidence" value="ECO:0007669"/>
    <property type="project" value="UniProtKB-UniRule"/>
</dbReference>
<dbReference type="GO" id="GO:0000287">
    <property type="term" value="F:magnesium ion binding"/>
    <property type="evidence" value="ECO:0007669"/>
    <property type="project" value="UniProtKB-UniRule"/>
</dbReference>
<dbReference type="GO" id="GO:0030976">
    <property type="term" value="F:thiamine pyrophosphate binding"/>
    <property type="evidence" value="ECO:0007669"/>
    <property type="project" value="UniProtKB-UniRule"/>
</dbReference>
<dbReference type="GO" id="GO:0052865">
    <property type="term" value="P:1-deoxy-D-xylulose 5-phosphate biosynthetic process"/>
    <property type="evidence" value="ECO:0007669"/>
    <property type="project" value="UniProtKB-UniPathway"/>
</dbReference>
<dbReference type="GO" id="GO:0019682">
    <property type="term" value="P:glyceraldehyde-3-phosphate metabolic process"/>
    <property type="evidence" value="ECO:0007669"/>
    <property type="project" value="UniProtKB-ARBA"/>
</dbReference>
<dbReference type="GO" id="GO:0016114">
    <property type="term" value="P:terpenoid biosynthetic process"/>
    <property type="evidence" value="ECO:0007669"/>
    <property type="project" value="UniProtKB-UniRule"/>
</dbReference>
<dbReference type="GO" id="GO:0009228">
    <property type="term" value="P:thiamine biosynthetic process"/>
    <property type="evidence" value="ECO:0007669"/>
    <property type="project" value="UniProtKB-UniRule"/>
</dbReference>
<dbReference type="CDD" id="cd02007">
    <property type="entry name" value="TPP_DXS"/>
    <property type="match status" value="1"/>
</dbReference>
<dbReference type="CDD" id="cd07033">
    <property type="entry name" value="TPP_PYR_DXS_TK_like"/>
    <property type="match status" value="1"/>
</dbReference>
<dbReference type="FunFam" id="3.40.50.920:FF:000002">
    <property type="entry name" value="1-deoxy-D-xylulose-5-phosphate synthase"/>
    <property type="match status" value="1"/>
</dbReference>
<dbReference type="FunFam" id="3.40.50.970:FF:000005">
    <property type="entry name" value="1-deoxy-D-xylulose-5-phosphate synthase"/>
    <property type="match status" value="1"/>
</dbReference>
<dbReference type="Gene3D" id="3.40.50.920">
    <property type="match status" value="1"/>
</dbReference>
<dbReference type="Gene3D" id="3.40.50.970">
    <property type="match status" value="2"/>
</dbReference>
<dbReference type="HAMAP" id="MF_00315">
    <property type="entry name" value="DXP_synth"/>
    <property type="match status" value="1"/>
</dbReference>
<dbReference type="InterPro" id="IPR005477">
    <property type="entry name" value="Dxylulose-5-P_synthase"/>
</dbReference>
<dbReference type="InterPro" id="IPR029061">
    <property type="entry name" value="THDP-binding"/>
</dbReference>
<dbReference type="InterPro" id="IPR009014">
    <property type="entry name" value="Transketo_C/PFOR_II"/>
</dbReference>
<dbReference type="InterPro" id="IPR005475">
    <property type="entry name" value="Transketolase-like_Pyr-bd"/>
</dbReference>
<dbReference type="InterPro" id="IPR020826">
    <property type="entry name" value="Transketolase_BS"/>
</dbReference>
<dbReference type="InterPro" id="IPR033248">
    <property type="entry name" value="Transketolase_C"/>
</dbReference>
<dbReference type="InterPro" id="IPR049557">
    <property type="entry name" value="Transketolase_CS"/>
</dbReference>
<dbReference type="NCBIfam" id="TIGR00204">
    <property type="entry name" value="dxs"/>
    <property type="match status" value="1"/>
</dbReference>
<dbReference type="NCBIfam" id="NF003933">
    <property type="entry name" value="PRK05444.2-2"/>
    <property type="match status" value="1"/>
</dbReference>
<dbReference type="PANTHER" id="PTHR43322">
    <property type="entry name" value="1-D-DEOXYXYLULOSE 5-PHOSPHATE SYNTHASE-RELATED"/>
    <property type="match status" value="1"/>
</dbReference>
<dbReference type="PANTHER" id="PTHR43322:SF5">
    <property type="entry name" value="1-DEOXY-D-XYLULOSE-5-PHOSPHATE SYNTHASE, CHLOROPLASTIC"/>
    <property type="match status" value="1"/>
</dbReference>
<dbReference type="Pfam" id="PF13292">
    <property type="entry name" value="DXP_synthase_N"/>
    <property type="match status" value="1"/>
</dbReference>
<dbReference type="Pfam" id="PF02779">
    <property type="entry name" value="Transket_pyr"/>
    <property type="match status" value="1"/>
</dbReference>
<dbReference type="Pfam" id="PF02780">
    <property type="entry name" value="Transketolase_C"/>
    <property type="match status" value="1"/>
</dbReference>
<dbReference type="SMART" id="SM00861">
    <property type="entry name" value="Transket_pyr"/>
    <property type="match status" value="1"/>
</dbReference>
<dbReference type="SUPFAM" id="SSF52518">
    <property type="entry name" value="Thiamin diphosphate-binding fold (THDP-binding)"/>
    <property type="match status" value="2"/>
</dbReference>
<dbReference type="SUPFAM" id="SSF52922">
    <property type="entry name" value="TK C-terminal domain-like"/>
    <property type="match status" value="1"/>
</dbReference>
<dbReference type="PROSITE" id="PS00801">
    <property type="entry name" value="TRANSKETOLASE_1"/>
    <property type="match status" value="1"/>
</dbReference>
<dbReference type="PROSITE" id="PS00802">
    <property type="entry name" value="TRANSKETOLASE_2"/>
    <property type="match status" value="1"/>
</dbReference>
<evidence type="ECO:0000255" key="1">
    <source>
        <dbReference type="HAMAP-Rule" id="MF_00315"/>
    </source>
</evidence>
<keyword id="KW-0414">Isoprene biosynthesis</keyword>
<keyword id="KW-0460">Magnesium</keyword>
<keyword id="KW-0479">Metal-binding</keyword>
<keyword id="KW-0784">Thiamine biosynthesis</keyword>
<keyword id="KW-0786">Thiamine pyrophosphate</keyword>
<keyword id="KW-0808">Transferase</keyword>